<reference key="1">
    <citation type="submission" date="2006-03" db="EMBL/GenBank/DDBJ databases">
        <title>Complete sequence of chromosome of Psychrobacter cryohalolentis K5.</title>
        <authorList>
            <consortium name="US DOE Joint Genome Institute"/>
            <person name="Copeland A."/>
            <person name="Lucas S."/>
            <person name="Lapidus A."/>
            <person name="Barry K."/>
            <person name="Detter J.C."/>
            <person name="Glavina T."/>
            <person name="Hammon N."/>
            <person name="Israni S."/>
            <person name="Dalin E."/>
            <person name="Tice H."/>
            <person name="Pitluck S."/>
            <person name="Brettin T."/>
            <person name="Bruce D."/>
            <person name="Han C."/>
            <person name="Tapia R."/>
            <person name="Sims D.R."/>
            <person name="Gilna P."/>
            <person name="Schmutz J."/>
            <person name="Larimer F."/>
            <person name="Land M."/>
            <person name="Hauser L."/>
            <person name="Kyrpides N."/>
            <person name="Kim E."/>
            <person name="Richardson P."/>
        </authorList>
    </citation>
    <scope>NUCLEOTIDE SEQUENCE [LARGE SCALE GENOMIC DNA]</scope>
    <source>
        <strain>ATCC BAA-1226 / DSM 17306 / VKM B-2378 / K5</strain>
    </source>
</reference>
<feature type="chain" id="PRO_1000017686" description="Adenine deaminase">
    <location>
        <begin position="1"/>
        <end position="332"/>
    </location>
</feature>
<feature type="active site" description="Proton donor" evidence="1">
    <location>
        <position position="197"/>
    </location>
</feature>
<feature type="binding site" evidence="1">
    <location>
        <position position="14"/>
    </location>
    <ligand>
        <name>Zn(2+)</name>
        <dbReference type="ChEBI" id="CHEBI:29105"/>
        <note>catalytic</note>
    </ligand>
</feature>
<feature type="binding site" evidence="1">
    <location>
        <position position="16"/>
    </location>
    <ligand>
        <name>Zn(2+)</name>
        <dbReference type="ChEBI" id="CHEBI:29105"/>
        <note>catalytic</note>
    </ligand>
</feature>
<feature type="binding site" evidence="1">
    <location>
        <position position="194"/>
    </location>
    <ligand>
        <name>Zn(2+)</name>
        <dbReference type="ChEBI" id="CHEBI:29105"/>
        <note>catalytic</note>
    </ligand>
</feature>
<feature type="binding site" evidence="1">
    <location>
        <position position="275"/>
    </location>
    <ligand>
        <name>Zn(2+)</name>
        <dbReference type="ChEBI" id="CHEBI:29105"/>
        <note>catalytic</note>
    </ligand>
</feature>
<feature type="binding site" evidence="1">
    <location>
        <position position="276"/>
    </location>
    <ligand>
        <name>substrate</name>
    </ligand>
</feature>
<feature type="site" description="Important for catalytic activity" evidence="1">
    <location>
        <position position="218"/>
    </location>
</feature>
<evidence type="ECO:0000255" key="1">
    <source>
        <dbReference type="HAMAP-Rule" id="MF_01962"/>
    </source>
</evidence>
<protein>
    <recommendedName>
        <fullName evidence="1">Adenine deaminase</fullName>
        <shortName evidence="1">ADE</shortName>
        <ecNumber evidence="1">3.5.4.2</ecNumber>
    </recommendedName>
    <alternativeName>
        <fullName evidence="1">Adenine aminohydrolase</fullName>
        <shortName evidence="1">AAH</shortName>
    </alternativeName>
</protein>
<name>ADE_PSYCK</name>
<proteinExistence type="inferred from homology"/>
<organism>
    <name type="scientific">Psychrobacter cryohalolentis (strain ATCC BAA-1226 / DSM 17306 / VKM B-2378 / K5)</name>
    <dbReference type="NCBI Taxonomy" id="335284"/>
    <lineage>
        <taxon>Bacteria</taxon>
        <taxon>Pseudomonadati</taxon>
        <taxon>Pseudomonadota</taxon>
        <taxon>Gammaproteobacteria</taxon>
        <taxon>Moraxellales</taxon>
        <taxon>Moraxellaceae</taxon>
        <taxon>Psychrobacter</taxon>
    </lineage>
</organism>
<comment type="function">
    <text evidence="1">Catalyzes the hydrolytic deamination of adenine to hypoxanthine. Plays an important role in the purine salvage pathway and in nitrogen catabolism.</text>
</comment>
<comment type="catalytic activity">
    <reaction evidence="1">
        <text>adenine + H2O + H(+) = hypoxanthine + NH4(+)</text>
        <dbReference type="Rhea" id="RHEA:23688"/>
        <dbReference type="ChEBI" id="CHEBI:15377"/>
        <dbReference type="ChEBI" id="CHEBI:15378"/>
        <dbReference type="ChEBI" id="CHEBI:16708"/>
        <dbReference type="ChEBI" id="CHEBI:17368"/>
        <dbReference type="ChEBI" id="CHEBI:28938"/>
        <dbReference type="EC" id="3.5.4.2"/>
    </reaction>
</comment>
<comment type="cofactor">
    <cofactor evidence="1">
        <name>Zn(2+)</name>
        <dbReference type="ChEBI" id="CHEBI:29105"/>
    </cofactor>
    <text evidence="1">Binds 1 zinc ion per subunit.</text>
</comment>
<comment type="similarity">
    <text evidence="1">Belongs to the metallo-dependent hydrolases superfamily. Adenosine and AMP deaminases family. Adenine deaminase type 2 subfamily.</text>
</comment>
<gene>
    <name type="ordered locus">Pcryo_0456</name>
</gene>
<keyword id="KW-0378">Hydrolase</keyword>
<keyword id="KW-0479">Metal-binding</keyword>
<keyword id="KW-0546">Nucleotide metabolism</keyword>
<keyword id="KW-0862">Zinc</keyword>
<sequence length="332" mass="38112">MIDLIKRLPKAELHLHIEGSLEPELMFRLAKKNQIEIPYKDIEDVRNAYNFTNLQTFLDIYYAGANVLITQDDFYDLTWEYILKCVEDNVIHTEIFFDPQTHTARGVTFETVITGIKRALADAKAQYGITSCIIMCFLRHLSQEEAFETLEQALPFKDDIIGVGLDSSELGNPPSKFIEVFKKAKEEGFKLVAHAGEEADFSYIYEALDLLDISRIDHGVQSIKSAELMQRLKDEQMPLTVCPNSNIELRVFNNYKEHNIKELLDYGLNITVNSDDPAYFKGYINQNFINISENLPLTEDDIITLVKNSFRSSFISDELKQQYLNRVDQAVG</sequence>
<accession>Q1QDL4</accession>
<dbReference type="EC" id="3.5.4.2" evidence="1"/>
<dbReference type="EMBL" id="CP000323">
    <property type="protein sequence ID" value="ABE74239.1"/>
    <property type="molecule type" value="Genomic_DNA"/>
</dbReference>
<dbReference type="RefSeq" id="WP_011512824.1">
    <property type="nucleotide sequence ID" value="NC_007969.1"/>
</dbReference>
<dbReference type="SMR" id="Q1QDL4"/>
<dbReference type="STRING" id="335284.Pcryo_0456"/>
<dbReference type="KEGG" id="pcr:Pcryo_0456"/>
<dbReference type="eggNOG" id="COG1816">
    <property type="taxonomic scope" value="Bacteria"/>
</dbReference>
<dbReference type="HOGENOM" id="CLU_039228_7_0_6"/>
<dbReference type="Proteomes" id="UP000002425">
    <property type="component" value="Chromosome"/>
</dbReference>
<dbReference type="GO" id="GO:0005829">
    <property type="term" value="C:cytosol"/>
    <property type="evidence" value="ECO:0007669"/>
    <property type="project" value="TreeGrafter"/>
</dbReference>
<dbReference type="GO" id="GO:0000034">
    <property type="term" value="F:adenine deaminase activity"/>
    <property type="evidence" value="ECO:0007669"/>
    <property type="project" value="UniProtKB-UniRule"/>
</dbReference>
<dbReference type="GO" id="GO:0008270">
    <property type="term" value="F:zinc ion binding"/>
    <property type="evidence" value="ECO:0007669"/>
    <property type="project" value="UniProtKB-UniRule"/>
</dbReference>
<dbReference type="GO" id="GO:0006146">
    <property type="term" value="P:adenine catabolic process"/>
    <property type="evidence" value="ECO:0007669"/>
    <property type="project" value="UniProtKB-UniRule"/>
</dbReference>
<dbReference type="GO" id="GO:0043103">
    <property type="term" value="P:hypoxanthine salvage"/>
    <property type="evidence" value="ECO:0007669"/>
    <property type="project" value="UniProtKB-UniRule"/>
</dbReference>
<dbReference type="GO" id="GO:0009117">
    <property type="term" value="P:nucleotide metabolic process"/>
    <property type="evidence" value="ECO:0007669"/>
    <property type="project" value="UniProtKB-KW"/>
</dbReference>
<dbReference type="CDD" id="cd01320">
    <property type="entry name" value="ADA"/>
    <property type="match status" value="1"/>
</dbReference>
<dbReference type="FunFam" id="3.20.20.140:FF:000039">
    <property type="entry name" value="Adenine deaminase"/>
    <property type="match status" value="1"/>
</dbReference>
<dbReference type="Gene3D" id="3.20.20.140">
    <property type="entry name" value="Metal-dependent hydrolases"/>
    <property type="match status" value="1"/>
</dbReference>
<dbReference type="HAMAP" id="MF_01962">
    <property type="entry name" value="Adenine_deaminase"/>
    <property type="match status" value="1"/>
</dbReference>
<dbReference type="InterPro" id="IPR001365">
    <property type="entry name" value="A_deaminase_dom"/>
</dbReference>
<dbReference type="InterPro" id="IPR028892">
    <property type="entry name" value="ADE"/>
</dbReference>
<dbReference type="InterPro" id="IPR006330">
    <property type="entry name" value="Ado/ade_deaminase"/>
</dbReference>
<dbReference type="InterPro" id="IPR032466">
    <property type="entry name" value="Metal_Hydrolase"/>
</dbReference>
<dbReference type="NCBIfam" id="TIGR01430">
    <property type="entry name" value="aden_deam"/>
    <property type="match status" value="1"/>
</dbReference>
<dbReference type="NCBIfam" id="NF006850">
    <property type="entry name" value="PRK09358.1-6"/>
    <property type="match status" value="1"/>
</dbReference>
<dbReference type="PANTHER" id="PTHR43114">
    <property type="entry name" value="ADENINE DEAMINASE"/>
    <property type="match status" value="1"/>
</dbReference>
<dbReference type="PANTHER" id="PTHR43114:SF6">
    <property type="entry name" value="ADENINE DEAMINASE"/>
    <property type="match status" value="1"/>
</dbReference>
<dbReference type="Pfam" id="PF00962">
    <property type="entry name" value="A_deaminase"/>
    <property type="match status" value="1"/>
</dbReference>
<dbReference type="SUPFAM" id="SSF51556">
    <property type="entry name" value="Metallo-dependent hydrolases"/>
    <property type="match status" value="1"/>
</dbReference>